<organism>
    <name type="scientific">Pseudoalteromonas atlantica (strain T6c / ATCC BAA-1087)</name>
    <dbReference type="NCBI Taxonomy" id="3042615"/>
    <lineage>
        <taxon>Bacteria</taxon>
        <taxon>Pseudomonadati</taxon>
        <taxon>Pseudomonadota</taxon>
        <taxon>Gammaproteobacteria</taxon>
        <taxon>Alteromonadales</taxon>
        <taxon>Alteromonadaceae</taxon>
        <taxon>Paraglaciecola</taxon>
    </lineage>
</organism>
<dbReference type="EC" id="1.8.1.2" evidence="1"/>
<dbReference type="EMBL" id="CP000388">
    <property type="protein sequence ID" value="ABG42537.1"/>
    <property type="molecule type" value="Genomic_DNA"/>
</dbReference>
<dbReference type="RefSeq" id="WP_011576734.1">
    <property type="nucleotide sequence ID" value="NC_008228.1"/>
</dbReference>
<dbReference type="SMR" id="Q15NK1"/>
<dbReference type="STRING" id="342610.Patl_4038"/>
<dbReference type="KEGG" id="pat:Patl_4038"/>
<dbReference type="eggNOG" id="COG0155">
    <property type="taxonomic scope" value="Bacteria"/>
</dbReference>
<dbReference type="HOGENOM" id="CLU_001975_3_2_6"/>
<dbReference type="OrthoDB" id="3189055at2"/>
<dbReference type="UniPathway" id="UPA00140">
    <property type="reaction ID" value="UER00207"/>
</dbReference>
<dbReference type="Proteomes" id="UP000001981">
    <property type="component" value="Chromosome"/>
</dbReference>
<dbReference type="GO" id="GO:0009337">
    <property type="term" value="C:sulfite reductase complex (NADPH)"/>
    <property type="evidence" value="ECO:0007669"/>
    <property type="project" value="InterPro"/>
</dbReference>
<dbReference type="GO" id="GO:0051539">
    <property type="term" value="F:4 iron, 4 sulfur cluster binding"/>
    <property type="evidence" value="ECO:0007669"/>
    <property type="project" value="UniProtKB-KW"/>
</dbReference>
<dbReference type="GO" id="GO:0020037">
    <property type="term" value="F:heme binding"/>
    <property type="evidence" value="ECO:0007669"/>
    <property type="project" value="InterPro"/>
</dbReference>
<dbReference type="GO" id="GO:0046872">
    <property type="term" value="F:metal ion binding"/>
    <property type="evidence" value="ECO:0007669"/>
    <property type="project" value="UniProtKB-KW"/>
</dbReference>
<dbReference type="GO" id="GO:0050661">
    <property type="term" value="F:NADP binding"/>
    <property type="evidence" value="ECO:0007669"/>
    <property type="project" value="InterPro"/>
</dbReference>
<dbReference type="GO" id="GO:0050311">
    <property type="term" value="F:sulfite reductase (ferredoxin) activity"/>
    <property type="evidence" value="ECO:0007669"/>
    <property type="project" value="TreeGrafter"/>
</dbReference>
<dbReference type="GO" id="GO:0004783">
    <property type="term" value="F:sulfite reductase (NADPH) activity"/>
    <property type="evidence" value="ECO:0007669"/>
    <property type="project" value="UniProtKB-UniRule"/>
</dbReference>
<dbReference type="GO" id="GO:0019344">
    <property type="term" value="P:cysteine biosynthetic process"/>
    <property type="evidence" value="ECO:0007669"/>
    <property type="project" value="UniProtKB-KW"/>
</dbReference>
<dbReference type="GO" id="GO:0070814">
    <property type="term" value="P:hydrogen sulfide biosynthetic process"/>
    <property type="evidence" value="ECO:0007669"/>
    <property type="project" value="UniProtKB-UniRule"/>
</dbReference>
<dbReference type="GO" id="GO:0000103">
    <property type="term" value="P:sulfate assimilation"/>
    <property type="evidence" value="ECO:0007669"/>
    <property type="project" value="UniProtKB-UniRule"/>
</dbReference>
<dbReference type="FunFam" id="3.30.413.10:FF:000003">
    <property type="entry name" value="Sulfite reductase [NADPH] hemoprotein beta-component"/>
    <property type="match status" value="1"/>
</dbReference>
<dbReference type="FunFam" id="3.30.413.10:FF:000004">
    <property type="entry name" value="Sulfite reductase [NADPH] hemoprotein beta-component"/>
    <property type="match status" value="1"/>
</dbReference>
<dbReference type="Gene3D" id="3.30.413.10">
    <property type="entry name" value="Sulfite Reductase Hemoprotein, domain 1"/>
    <property type="match status" value="2"/>
</dbReference>
<dbReference type="HAMAP" id="MF_01540">
    <property type="entry name" value="CysI"/>
    <property type="match status" value="1"/>
</dbReference>
<dbReference type="InterPro" id="IPR011786">
    <property type="entry name" value="CysI"/>
</dbReference>
<dbReference type="InterPro" id="IPR005117">
    <property type="entry name" value="NiRdtase/SiRdtase_haem-b_fer"/>
</dbReference>
<dbReference type="InterPro" id="IPR036136">
    <property type="entry name" value="Nit/Sulf_reduc_fer-like_dom_sf"/>
</dbReference>
<dbReference type="InterPro" id="IPR006067">
    <property type="entry name" value="NO2/SO3_Rdtase_4Fe4S_dom"/>
</dbReference>
<dbReference type="InterPro" id="IPR045169">
    <property type="entry name" value="NO2/SO3_Rdtase_4Fe4S_prot"/>
</dbReference>
<dbReference type="InterPro" id="IPR045854">
    <property type="entry name" value="NO2/SO3_Rdtase_4Fe4S_sf"/>
</dbReference>
<dbReference type="InterPro" id="IPR006066">
    <property type="entry name" value="NO2/SO3_Rdtase_FeS/sirohaem_BS"/>
</dbReference>
<dbReference type="NCBIfam" id="TIGR02041">
    <property type="entry name" value="CysI"/>
    <property type="match status" value="1"/>
</dbReference>
<dbReference type="NCBIfam" id="NF010029">
    <property type="entry name" value="PRK13504.1"/>
    <property type="match status" value="1"/>
</dbReference>
<dbReference type="PANTHER" id="PTHR11493:SF47">
    <property type="entry name" value="SULFITE REDUCTASE [NADPH] SUBUNIT BETA"/>
    <property type="match status" value="1"/>
</dbReference>
<dbReference type="PANTHER" id="PTHR11493">
    <property type="entry name" value="SULFITE REDUCTASE [NADPH] SUBUNIT BETA-RELATED"/>
    <property type="match status" value="1"/>
</dbReference>
<dbReference type="Pfam" id="PF01077">
    <property type="entry name" value="NIR_SIR"/>
    <property type="match status" value="1"/>
</dbReference>
<dbReference type="Pfam" id="PF03460">
    <property type="entry name" value="NIR_SIR_ferr"/>
    <property type="match status" value="2"/>
</dbReference>
<dbReference type="PRINTS" id="PR00397">
    <property type="entry name" value="SIROHAEM"/>
</dbReference>
<dbReference type="SUPFAM" id="SSF56014">
    <property type="entry name" value="Nitrite and sulphite reductase 4Fe-4S domain-like"/>
    <property type="match status" value="2"/>
</dbReference>
<dbReference type="SUPFAM" id="SSF55124">
    <property type="entry name" value="Nitrite/Sulfite reductase N-terminal domain-like"/>
    <property type="match status" value="2"/>
</dbReference>
<dbReference type="PROSITE" id="PS00365">
    <property type="entry name" value="NIR_SIR"/>
    <property type="match status" value="1"/>
</dbReference>
<reference key="1">
    <citation type="submission" date="2006-06" db="EMBL/GenBank/DDBJ databases">
        <title>Complete sequence of Pseudoalteromonas atlantica T6c.</title>
        <authorList>
            <consortium name="US DOE Joint Genome Institute"/>
            <person name="Copeland A."/>
            <person name="Lucas S."/>
            <person name="Lapidus A."/>
            <person name="Barry K."/>
            <person name="Detter J.C."/>
            <person name="Glavina del Rio T."/>
            <person name="Hammon N."/>
            <person name="Israni S."/>
            <person name="Dalin E."/>
            <person name="Tice H."/>
            <person name="Pitluck S."/>
            <person name="Saunders E."/>
            <person name="Brettin T."/>
            <person name="Bruce D."/>
            <person name="Han C."/>
            <person name="Tapia R."/>
            <person name="Gilna P."/>
            <person name="Schmutz J."/>
            <person name="Larimer F."/>
            <person name="Land M."/>
            <person name="Hauser L."/>
            <person name="Kyrpides N."/>
            <person name="Kim E."/>
            <person name="Karls A.C."/>
            <person name="Bartlett D."/>
            <person name="Higgins B.P."/>
            <person name="Richardson P."/>
        </authorList>
    </citation>
    <scope>NUCLEOTIDE SEQUENCE [LARGE SCALE GENOMIC DNA]</scope>
    <source>
        <strain>T6c / ATCC BAA-1087</strain>
    </source>
</reference>
<proteinExistence type="inferred from homology"/>
<protein>
    <recommendedName>
        <fullName evidence="1">Sulfite reductase [NADPH] hemoprotein beta-component</fullName>
        <shortName evidence="1">SiR-HP</shortName>
        <shortName evidence="1">SiRHP</shortName>
        <ecNumber evidence="1">1.8.1.2</ecNumber>
    </recommendedName>
</protein>
<gene>
    <name evidence="1" type="primary">cysI</name>
    <name type="ordered locus">Patl_4038</name>
</gene>
<sequence>MTTDNKFVVEGKLADNERLKGESNFLRGTIAEDLKDDLTGAFVGDNFQLIRFHGMYQQDDRDLRAERAKQKLEPLQNVMLRARLPGGIIKPQQWLAIDKFAEEKSLYGSIRLTTRQTFQFHGVLKPNIKLMHQTLNQVGIDSIATAGDVNRNVLCTSNPIESAVHQEAYEWATKISEHLLPKTRAYAEIWLDGEKKETTDHEPILGANYLPRKFKTTVAIPPLNDVDVHANDLNFIAISKDGKLVGFNVLVGGGLAMTHGDHATFPRKASDFGFIKVEDTLAIAEAVVSTQRDWGNRVNRKNAKTKYTLERVGVENFKAEVEKRSGVTFGESQAYEFTERGDRIGWVEGIDGKHHLTLFIENGRILDYPGKPLKTGCAEIAKIHDGDFRLTANQNLIVAGVSEQNKAKVEEIARAHGLIEDDLSAQRKDSMACVALPTCPLAMAEAERYLPEAVTQLEGILAKHAIAQKSIIYRVTGCPNGCGRSMLAEIGLVGKGPGKYNLHLGGNRQGTRIPKMYKENIGEQQIMDELDVLIGQWAKEAQSDESFGDFVIRTGVIAEVVNSAEDFYA</sequence>
<accession>Q15NK1</accession>
<evidence type="ECO:0000255" key="1">
    <source>
        <dbReference type="HAMAP-Rule" id="MF_01540"/>
    </source>
</evidence>
<feature type="chain" id="PRO_0000292961" description="Sulfite reductase [NADPH] hemoprotein beta-component">
    <location>
        <begin position="1"/>
        <end position="569"/>
    </location>
</feature>
<feature type="binding site" evidence="1">
    <location>
        <position position="433"/>
    </location>
    <ligand>
        <name>[4Fe-4S] cluster</name>
        <dbReference type="ChEBI" id="CHEBI:49883"/>
    </ligand>
</feature>
<feature type="binding site" evidence="1">
    <location>
        <position position="439"/>
    </location>
    <ligand>
        <name>[4Fe-4S] cluster</name>
        <dbReference type="ChEBI" id="CHEBI:49883"/>
    </ligand>
</feature>
<feature type="binding site" evidence="1">
    <location>
        <position position="478"/>
    </location>
    <ligand>
        <name>[4Fe-4S] cluster</name>
        <dbReference type="ChEBI" id="CHEBI:49883"/>
    </ligand>
</feature>
<feature type="binding site" evidence="1">
    <location>
        <position position="482"/>
    </location>
    <ligand>
        <name>[4Fe-4S] cluster</name>
        <dbReference type="ChEBI" id="CHEBI:49883"/>
    </ligand>
</feature>
<feature type="binding site" description="axial binding residue" evidence="1">
    <location>
        <position position="482"/>
    </location>
    <ligand>
        <name>siroheme</name>
        <dbReference type="ChEBI" id="CHEBI:60052"/>
    </ligand>
    <ligandPart>
        <name>Fe</name>
        <dbReference type="ChEBI" id="CHEBI:18248"/>
    </ligandPart>
</feature>
<keyword id="KW-0004">4Fe-4S</keyword>
<keyword id="KW-0028">Amino-acid biosynthesis</keyword>
<keyword id="KW-0198">Cysteine biosynthesis</keyword>
<keyword id="KW-0349">Heme</keyword>
<keyword id="KW-0408">Iron</keyword>
<keyword id="KW-0411">Iron-sulfur</keyword>
<keyword id="KW-0479">Metal-binding</keyword>
<keyword id="KW-0521">NADP</keyword>
<keyword id="KW-0560">Oxidoreductase</keyword>
<name>CYSI_PSEA6</name>
<comment type="function">
    <text evidence="1">Component of the sulfite reductase complex that catalyzes the 6-electron reduction of sulfite to sulfide. This is one of several activities required for the biosynthesis of L-cysteine from sulfate.</text>
</comment>
<comment type="catalytic activity">
    <reaction evidence="1">
        <text>hydrogen sulfide + 3 NADP(+) + 3 H2O = sulfite + 3 NADPH + 4 H(+)</text>
        <dbReference type="Rhea" id="RHEA:13801"/>
        <dbReference type="ChEBI" id="CHEBI:15377"/>
        <dbReference type="ChEBI" id="CHEBI:15378"/>
        <dbReference type="ChEBI" id="CHEBI:17359"/>
        <dbReference type="ChEBI" id="CHEBI:29919"/>
        <dbReference type="ChEBI" id="CHEBI:57783"/>
        <dbReference type="ChEBI" id="CHEBI:58349"/>
        <dbReference type="EC" id="1.8.1.2"/>
    </reaction>
</comment>
<comment type="cofactor">
    <cofactor evidence="1">
        <name>siroheme</name>
        <dbReference type="ChEBI" id="CHEBI:60052"/>
    </cofactor>
    <text evidence="1">Binds 1 siroheme per subunit.</text>
</comment>
<comment type="cofactor">
    <cofactor evidence="1">
        <name>[4Fe-4S] cluster</name>
        <dbReference type="ChEBI" id="CHEBI:49883"/>
    </cofactor>
    <text evidence="1">Binds 1 [4Fe-4S] cluster per subunit.</text>
</comment>
<comment type="pathway">
    <text evidence="1">Sulfur metabolism; hydrogen sulfide biosynthesis; hydrogen sulfide from sulfite (NADPH route): step 1/1.</text>
</comment>
<comment type="subunit">
    <text evidence="1">Alpha(8)-beta(8). The alpha component is a flavoprotein, the beta component is a hemoprotein.</text>
</comment>
<comment type="similarity">
    <text evidence="1">Belongs to the nitrite and sulfite reductase 4Fe-4S domain family.</text>
</comment>